<name>GPA16_CAEEL</name>
<gene>
    <name type="primary">gpa-16</name>
    <name type="synonym">spn-1</name>
    <name type="ORF">Y95B8A.5</name>
</gene>
<dbReference type="EMBL" id="AY008138">
    <property type="protein sequence ID" value="AAG32091.1"/>
    <property type="molecule type" value="mRNA"/>
</dbReference>
<dbReference type="EMBL" id="FO081787">
    <property type="protein sequence ID" value="CCD73543.1"/>
    <property type="molecule type" value="Genomic_DNA"/>
</dbReference>
<dbReference type="RefSeq" id="NP_490790.1">
    <property type="nucleotide sequence ID" value="NM_058389.4"/>
</dbReference>
<dbReference type="SMR" id="Q9N2V6"/>
<dbReference type="BioGRID" id="37175">
    <property type="interactions" value="5"/>
</dbReference>
<dbReference type="FunCoup" id="Q9N2V6">
    <property type="interactions" value="1047"/>
</dbReference>
<dbReference type="IntAct" id="Q9N2V6">
    <property type="interactions" value="2"/>
</dbReference>
<dbReference type="STRING" id="6239.Y95B8A.5a.1"/>
<dbReference type="PaxDb" id="6239-Y95B8A.5"/>
<dbReference type="PeptideAtlas" id="Q9N2V6"/>
<dbReference type="EnsemblMetazoa" id="Y95B8A.5a.1">
    <property type="protein sequence ID" value="Y95B8A.5a.1"/>
    <property type="gene ID" value="WBGene00001678"/>
</dbReference>
<dbReference type="GeneID" id="171675"/>
<dbReference type="KEGG" id="cel:CELE_Y95B8A.5"/>
<dbReference type="UCSC" id="Y95B8A.5">
    <property type="organism name" value="c. elegans"/>
</dbReference>
<dbReference type="AGR" id="WB:WBGene00001678"/>
<dbReference type="CTD" id="171675"/>
<dbReference type="WormBase" id="Y95B8A.5a">
    <property type="protein sequence ID" value="CE24692"/>
    <property type="gene ID" value="WBGene00001678"/>
    <property type="gene designation" value="gpa-16"/>
</dbReference>
<dbReference type="eggNOG" id="KOG0082">
    <property type="taxonomic scope" value="Eukaryota"/>
</dbReference>
<dbReference type="HOGENOM" id="CLU_014184_6_0_1"/>
<dbReference type="InParanoid" id="Q9N2V6"/>
<dbReference type="OMA" id="MRIIHDV"/>
<dbReference type="OrthoDB" id="5817230at2759"/>
<dbReference type="PhylomeDB" id="Q9N2V6"/>
<dbReference type="Reactome" id="R-CEL-170670">
    <property type="pathway name" value="Adenylate cyclase inhibitory pathway"/>
</dbReference>
<dbReference type="Reactome" id="R-CEL-392170">
    <property type="pathway name" value="ADP signalling through P2Y purinoceptor 12"/>
</dbReference>
<dbReference type="Reactome" id="R-CEL-400042">
    <property type="pathway name" value="Adrenaline,noradrenaline inhibits insulin secretion"/>
</dbReference>
<dbReference type="Reactome" id="R-CEL-418594">
    <property type="pathway name" value="G alpha (i) signalling events"/>
</dbReference>
<dbReference type="PRO" id="PR:Q9N2V6"/>
<dbReference type="Proteomes" id="UP000001940">
    <property type="component" value="Chromosome I"/>
</dbReference>
<dbReference type="ExpressionAtlas" id="Q9N2V6">
    <property type="expression patterns" value="baseline and differential"/>
</dbReference>
<dbReference type="GO" id="GO:0005938">
    <property type="term" value="C:cell cortex"/>
    <property type="evidence" value="ECO:0000314"/>
    <property type="project" value="WormBase"/>
</dbReference>
<dbReference type="GO" id="GO:0005737">
    <property type="term" value="C:cytoplasm"/>
    <property type="evidence" value="ECO:0000318"/>
    <property type="project" value="GO_Central"/>
</dbReference>
<dbReference type="GO" id="GO:0005834">
    <property type="term" value="C:heterotrimeric G-protein complex"/>
    <property type="evidence" value="ECO:0000250"/>
    <property type="project" value="WormBase"/>
</dbReference>
<dbReference type="GO" id="GO:0001664">
    <property type="term" value="F:G protein-coupled receptor binding"/>
    <property type="evidence" value="ECO:0000318"/>
    <property type="project" value="GO_Central"/>
</dbReference>
<dbReference type="GO" id="GO:0031683">
    <property type="term" value="F:G-protein beta/gamma-subunit complex binding"/>
    <property type="evidence" value="ECO:0000318"/>
    <property type="project" value="GO_Central"/>
</dbReference>
<dbReference type="GO" id="GO:0019003">
    <property type="term" value="F:GDP binding"/>
    <property type="evidence" value="ECO:0000250"/>
    <property type="project" value="WormBase"/>
</dbReference>
<dbReference type="GO" id="GO:0005525">
    <property type="term" value="F:GTP binding"/>
    <property type="evidence" value="ECO:0000250"/>
    <property type="project" value="WormBase"/>
</dbReference>
<dbReference type="GO" id="GO:0003924">
    <property type="term" value="F:GTPase activity"/>
    <property type="evidence" value="ECO:0000250"/>
    <property type="project" value="WormBase"/>
</dbReference>
<dbReference type="GO" id="GO:0046872">
    <property type="term" value="F:metal ion binding"/>
    <property type="evidence" value="ECO:0007669"/>
    <property type="project" value="UniProtKB-KW"/>
</dbReference>
<dbReference type="GO" id="GO:0007188">
    <property type="term" value="P:adenylate cyclase-modulating G protein-coupled receptor signaling pathway"/>
    <property type="evidence" value="ECO:0000318"/>
    <property type="project" value="GO_Central"/>
</dbReference>
<dbReference type="GO" id="GO:0051301">
    <property type="term" value="P:cell division"/>
    <property type="evidence" value="ECO:0007669"/>
    <property type="project" value="UniProtKB-KW"/>
</dbReference>
<dbReference type="GO" id="GO:0000578">
    <property type="term" value="P:embryonic axis specification"/>
    <property type="evidence" value="ECO:0000315"/>
    <property type="project" value="WormBase"/>
</dbReference>
<dbReference type="GO" id="GO:0000132">
    <property type="term" value="P:establishment of mitotic spindle orientation"/>
    <property type="evidence" value="ECO:0000315"/>
    <property type="project" value="WormBase"/>
</dbReference>
<dbReference type="CDD" id="cd00066">
    <property type="entry name" value="G-alpha"/>
    <property type="match status" value="1"/>
</dbReference>
<dbReference type="FunFam" id="3.40.50.300:FF:002307">
    <property type="entry name" value="Guanine nucleotide-binding protein G(k) subunit alpha"/>
    <property type="match status" value="1"/>
</dbReference>
<dbReference type="FunFam" id="1.10.400.10:FF:000002">
    <property type="entry name" value="guanine nucleotide-binding protein G(Q) subunit alpha"/>
    <property type="match status" value="1"/>
</dbReference>
<dbReference type="FunFam" id="3.40.50.300:FF:000692">
    <property type="entry name" value="Guanine nucleotide-binding protein subunit alpha"/>
    <property type="match status" value="1"/>
</dbReference>
<dbReference type="Gene3D" id="1.10.400.10">
    <property type="entry name" value="GI Alpha 1, domain 2-like"/>
    <property type="match status" value="1"/>
</dbReference>
<dbReference type="Gene3D" id="3.40.50.300">
    <property type="entry name" value="P-loop containing nucleotide triphosphate hydrolases"/>
    <property type="match status" value="1"/>
</dbReference>
<dbReference type="InterPro" id="IPR001408">
    <property type="entry name" value="Gprotein_alpha_I"/>
</dbReference>
<dbReference type="InterPro" id="IPR001019">
    <property type="entry name" value="Gprotein_alpha_su"/>
</dbReference>
<dbReference type="InterPro" id="IPR011025">
    <property type="entry name" value="GproteinA_insert"/>
</dbReference>
<dbReference type="InterPro" id="IPR027417">
    <property type="entry name" value="P-loop_NTPase"/>
</dbReference>
<dbReference type="PANTHER" id="PTHR10218:SF227">
    <property type="entry name" value="G PROTEIN ALPHA I SUBUNIT"/>
    <property type="match status" value="1"/>
</dbReference>
<dbReference type="PANTHER" id="PTHR10218">
    <property type="entry name" value="GTP-BINDING PROTEIN ALPHA SUBUNIT"/>
    <property type="match status" value="1"/>
</dbReference>
<dbReference type="Pfam" id="PF00503">
    <property type="entry name" value="G-alpha"/>
    <property type="match status" value="1"/>
</dbReference>
<dbReference type="PRINTS" id="PR00318">
    <property type="entry name" value="GPROTEINA"/>
</dbReference>
<dbReference type="PRINTS" id="PR00441">
    <property type="entry name" value="GPROTEINAI"/>
</dbReference>
<dbReference type="SMART" id="SM00275">
    <property type="entry name" value="G_alpha"/>
    <property type="match status" value="1"/>
</dbReference>
<dbReference type="SUPFAM" id="SSF52540">
    <property type="entry name" value="P-loop containing nucleoside triphosphate hydrolases"/>
    <property type="match status" value="1"/>
</dbReference>
<dbReference type="SUPFAM" id="SSF47895">
    <property type="entry name" value="Transducin (alpha subunit), insertion domain"/>
    <property type="match status" value="1"/>
</dbReference>
<dbReference type="PROSITE" id="PS51882">
    <property type="entry name" value="G_ALPHA"/>
    <property type="match status" value="1"/>
</dbReference>
<protein>
    <recommendedName>
        <fullName>Guanine nucleotide-binding protein alpha-16 subunit</fullName>
    </recommendedName>
</protein>
<feature type="initiator methionine" description="Removed" evidence="2">
    <location>
        <position position="1"/>
    </location>
</feature>
<feature type="chain" id="PRO_0000203657" description="Guanine nucleotide-binding protein alpha-16 subunit">
    <location>
        <begin position="2"/>
        <end position="357"/>
    </location>
</feature>
<feature type="domain" description="G-alpha" evidence="3">
    <location>
        <begin position="32"/>
        <end position="357"/>
    </location>
</feature>
<feature type="region of interest" description="G1 motif" evidence="3">
    <location>
        <begin position="35"/>
        <end position="48"/>
    </location>
</feature>
<feature type="region of interest" description="G2 motif" evidence="3">
    <location>
        <begin position="173"/>
        <end position="181"/>
    </location>
</feature>
<feature type="region of interest" description="G3 motif" evidence="3">
    <location>
        <begin position="196"/>
        <end position="205"/>
    </location>
</feature>
<feature type="region of interest" description="G4 motif" evidence="3">
    <location>
        <begin position="265"/>
        <end position="272"/>
    </location>
</feature>
<feature type="region of interest" description="G5 motif" evidence="3">
    <location>
        <begin position="327"/>
        <end position="332"/>
    </location>
</feature>
<feature type="binding site" evidence="1">
    <location>
        <begin position="40"/>
        <end position="47"/>
    </location>
    <ligand>
        <name>GTP</name>
        <dbReference type="ChEBI" id="CHEBI:37565"/>
    </ligand>
</feature>
<feature type="binding site" evidence="1">
    <location>
        <position position="47"/>
    </location>
    <ligand>
        <name>Mg(2+)</name>
        <dbReference type="ChEBI" id="CHEBI:18420"/>
    </ligand>
</feature>
<feature type="binding site" evidence="1">
    <location>
        <begin position="175"/>
        <end position="181"/>
    </location>
    <ligand>
        <name>GTP</name>
        <dbReference type="ChEBI" id="CHEBI:37565"/>
    </ligand>
</feature>
<feature type="binding site" evidence="1">
    <location>
        <position position="181"/>
    </location>
    <ligand>
        <name>Mg(2+)</name>
        <dbReference type="ChEBI" id="CHEBI:18420"/>
    </ligand>
</feature>
<feature type="binding site" evidence="1">
    <location>
        <begin position="200"/>
        <end position="204"/>
    </location>
    <ligand>
        <name>GTP</name>
        <dbReference type="ChEBI" id="CHEBI:37565"/>
    </ligand>
</feature>
<feature type="binding site" evidence="1">
    <location>
        <begin position="269"/>
        <end position="272"/>
    </location>
    <ligand>
        <name>GTP</name>
        <dbReference type="ChEBI" id="CHEBI:37565"/>
    </ligand>
</feature>
<feature type="binding site" evidence="1">
    <location>
        <position position="329"/>
    </location>
    <ligand>
        <name>GTP</name>
        <dbReference type="ChEBI" id="CHEBI:37565"/>
    </ligand>
</feature>
<feature type="lipid moiety-binding region" description="N-myristoyl glycine" evidence="2">
    <location>
        <position position="2"/>
    </location>
</feature>
<feature type="lipid moiety-binding region" description="S-palmitoyl cysteine" evidence="2">
    <location>
        <position position="3"/>
    </location>
</feature>
<feature type="mutagenesis site" description="In it143ts; temperature sensitive mutant. 70 percent of embryonic lethality. In 31 percent of EMS blastomeres, loss of nuclear rotation resulting in the transversal localization of the mitotic spindle." evidence="4">
    <original>G</original>
    <variation>D</variation>
    <location>
        <position position="202"/>
    </location>
</feature>
<keyword id="KW-0131">Cell cycle</keyword>
<keyword id="KW-0132">Cell division</keyword>
<keyword id="KW-0342">GTP-binding</keyword>
<keyword id="KW-0449">Lipoprotein</keyword>
<keyword id="KW-0460">Magnesium</keyword>
<keyword id="KW-0479">Metal-binding</keyword>
<keyword id="KW-0498">Mitosis</keyword>
<keyword id="KW-0519">Myristate</keyword>
<keyword id="KW-0547">Nucleotide-binding</keyword>
<keyword id="KW-0564">Palmitate</keyword>
<keyword id="KW-1185">Reference proteome</keyword>
<keyword id="KW-0807">Transducer</keyword>
<accession>Q9N2V6</accession>
<proteinExistence type="evidence at protein level"/>
<comment type="function">
    <text evidence="4 5">Guanine nucleotide-binding proteins (G proteins) are involved as modulators or transducers in various transmembrane signaling systems. In the 1-cell embryo, probably together with goa-1, controls nuclear rotation and spindle elongation during mitosis (PubMed:14534135). During the first embryonic cell divisons, plays a role in gpr-1/2 cortical localization and in the proper orientation of EMS blastomere mitotic spindle (PubMed:14534135).</text>
</comment>
<comment type="subunit">
    <text>G proteins are composed of 3 units; alpha, beta and gamma. The alpha chain contains the guanine nucleotide binding site.</text>
</comment>
<comment type="interaction">
    <interactant intactId="EBI-1005005">
        <id>Q9N2V6</id>
    </interactant>
    <interactant intactId="EBI-316069">
        <id>Q95QJ7</id>
        <label>gpr-1</label>
    </interactant>
    <organismsDiffer>false</organismsDiffer>
    <experiments>2</experiments>
</comment>
<comment type="interaction">
    <interactant intactId="EBI-1005005">
        <id>Q9N2V6</id>
    </interactant>
    <interactant intactId="EBI-1004494">
        <id>Q9GSX9-1</id>
        <label>ric-8</label>
    </interactant>
    <organismsDiffer>false</organismsDiffer>
    <experiments>2</experiments>
</comment>
<comment type="disruption phenotype">
    <text evidence="4">Simultaneous RNAi-mediated knockdown of both gpa-16 and goa-1 causes, in the one-cell embryo, a lack of nuclear rocking movements from prophase to metaphase and symmetric spindle elongation without transversal oscillations of the poles during anaphase. At the 2-cell stage embryo, nuclei are mispositioned and fail to exhibit nuclear rotation. In addition, causes a loss of gpr-1/2 cortical localization in 2-cell and 4-cell stage embryos.</text>
</comment>
<comment type="similarity">
    <text evidence="5">Belongs to the G-alpha family.</text>
</comment>
<reference key="1">
    <citation type="submission" date="2000-09" db="EMBL/GenBank/DDBJ databases">
        <title>Interaction analysis of the complete G-alpha subfamily of heterotrimeric G proteins from Caenorhabditis elegans.</title>
        <authorList>
            <person name="Cuppen E."/>
            <person name="Jansen G."/>
            <person name="Plasterk R.H.A."/>
        </authorList>
    </citation>
    <scope>NUCLEOTIDE SEQUENCE [MRNA]</scope>
    <source>
        <strain>Bristol N2</strain>
    </source>
</reference>
<reference key="2">
    <citation type="journal article" date="1998" name="Science">
        <title>Genome sequence of the nematode C. elegans: a platform for investigating biology.</title>
        <authorList>
            <consortium name="The C. elegans sequencing consortium"/>
        </authorList>
    </citation>
    <scope>NUCLEOTIDE SEQUENCE [LARGE SCALE GENOMIC DNA]</scope>
    <source>
        <strain>Bristol N2</strain>
    </source>
</reference>
<reference key="3">
    <citation type="journal article" date="1999" name="Nat. Genet.">
        <title>The complete family of genes encoding G proteins of Caenorhabditis elegans.</title>
        <authorList>
            <person name="Jansen G."/>
            <person name="Thijssen K.L."/>
            <person name="Werner P."/>
            <person name="van der Horst M."/>
            <person name="Hazendonk E."/>
            <person name="Plasterk R.H.A."/>
        </authorList>
    </citation>
    <scope>GENE FAMILY</scope>
    <scope>NOMENCLATURE</scope>
</reference>
<reference key="4">
    <citation type="journal article" date="2003" name="Development">
        <title>LET-99 opposes Galpha/GPR signaling to generate asymmetry for spindle positioning in response to PAR and MES-1/SRC-1 signaling.</title>
        <authorList>
            <person name="Tsou M.-F.B."/>
            <person name="Hayashi A."/>
            <person name="Rose L.S."/>
        </authorList>
    </citation>
    <scope>FUNCTION</scope>
    <scope>DISRUPTION PHENOTYPE</scope>
    <scope>MUTAGENESIS OF GLY-202</scope>
</reference>
<sequence length="357" mass="41328">MGCIMSQEDEAAKRRSKKIDRLLKEDGENSMRTIKLLLLGAGESGKSTILKQMRIIHDVGYTTEERKVFRGVVYGNIILSLNAIIHAMEQLKISFTTLDHESDARKLLMFSTTGEEDELPEELVVLMKSVWSDSGIQKALERSREYQLNDSAGYYLSQLDRICAPNYIPTQDDILRTRIKTTGIVETQFVYKDRLFLVFDVGGQRSERKKWIHCFEDVTALIFCVALSEYDMVLVEDCQTNRMRESLKLFDSICNNKWFVETSIILFLNKKDLFEEKIVRSPLTHCFPEYTGANNYEEASAYIQQQFEDMNKRTTGEKNQEIYTQFTCATDTNNIRFVFDAVTDIIIRDNLRTCGLY</sequence>
<evidence type="ECO:0000250" key="1"/>
<evidence type="ECO:0000255" key="2"/>
<evidence type="ECO:0000255" key="3">
    <source>
        <dbReference type="PROSITE-ProRule" id="PRU01230"/>
    </source>
</evidence>
<evidence type="ECO:0000269" key="4">
    <source>
    </source>
</evidence>
<evidence type="ECO:0000305" key="5"/>
<organism>
    <name type="scientific">Caenorhabditis elegans</name>
    <dbReference type="NCBI Taxonomy" id="6239"/>
    <lineage>
        <taxon>Eukaryota</taxon>
        <taxon>Metazoa</taxon>
        <taxon>Ecdysozoa</taxon>
        <taxon>Nematoda</taxon>
        <taxon>Chromadorea</taxon>
        <taxon>Rhabditida</taxon>
        <taxon>Rhabditina</taxon>
        <taxon>Rhabditomorpha</taxon>
        <taxon>Rhabditoidea</taxon>
        <taxon>Rhabditidae</taxon>
        <taxon>Peloderinae</taxon>
        <taxon>Caenorhabditis</taxon>
    </lineage>
</organism>